<protein>
    <recommendedName>
        <fullName>Methylmalonyl-CoA decarboxylase</fullName>
        <shortName>MMCD</shortName>
        <ecNumber>4.1.1.-</ecNumber>
    </recommendedName>
    <alternativeName>
        <fullName>Transcarboxylase</fullName>
    </alternativeName>
</protein>
<comment type="function">
    <text evidence="1">Catalyzes the decarboxylation of (R)-methylmalonyl-CoA to propionyl-CoA. Could be part of a pathway that converts succinate to propanoate.</text>
</comment>
<comment type="catalytic activity">
    <reaction evidence="1">
        <text>(R)-methylmalonyl-CoA + H(+) = propanoyl-CoA + CO2</text>
        <dbReference type="Rhea" id="RHEA:27666"/>
        <dbReference type="ChEBI" id="CHEBI:15378"/>
        <dbReference type="ChEBI" id="CHEBI:16526"/>
        <dbReference type="ChEBI" id="CHEBI:57326"/>
        <dbReference type="ChEBI" id="CHEBI:57392"/>
    </reaction>
</comment>
<comment type="subunit">
    <text evidence="2">Dimer of homotrimers.</text>
</comment>
<comment type="similarity">
    <text evidence="3">Belongs to the enoyl-CoA hydratase/isomerase family.</text>
</comment>
<comment type="sequence caution" evidence="3">
    <conflict type="erroneous initiation">
        <sequence resource="EMBL-CDS" id="AAA69086"/>
    </conflict>
    <text>Extended N-terminus.</text>
</comment>
<name>SCPB_ECOLI</name>
<evidence type="ECO:0000269" key="1">
    <source>
    </source>
</evidence>
<evidence type="ECO:0000269" key="2">
    <source>
    </source>
</evidence>
<evidence type="ECO:0000305" key="3"/>
<evidence type="ECO:0007829" key="4">
    <source>
        <dbReference type="PDB" id="1EF9"/>
    </source>
</evidence>
<evidence type="ECO:0007829" key="5">
    <source>
        <dbReference type="PDB" id="6N92"/>
    </source>
</evidence>
<dbReference type="EC" id="4.1.1.-"/>
<dbReference type="EMBL" id="U28377">
    <property type="protein sequence ID" value="AAA69086.1"/>
    <property type="status" value="ALT_INIT"/>
    <property type="molecule type" value="Genomic_DNA"/>
</dbReference>
<dbReference type="EMBL" id="U00096">
    <property type="protein sequence ID" value="AAC75956.2"/>
    <property type="molecule type" value="Genomic_DNA"/>
</dbReference>
<dbReference type="EMBL" id="AP009048">
    <property type="protein sequence ID" value="BAE76983.1"/>
    <property type="molecule type" value="Genomic_DNA"/>
</dbReference>
<dbReference type="RefSeq" id="NP_417394.4">
    <property type="nucleotide sequence ID" value="NC_000913.3"/>
</dbReference>
<dbReference type="RefSeq" id="WP_000122080.1">
    <property type="nucleotide sequence ID" value="NZ_STEB01000001.1"/>
</dbReference>
<dbReference type="PDB" id="1EF8">
    <property type="method" value="X-ray"/>
    <property type="resolution" value="1.85 A"/>
    <property type="chains" value="A/B/C=1-261"/>
</dbReference>
<dbReference type="PDB" id="1EF9">
    <property type="method" value="X-ray"/>
    <property type="resolution" value="2.70 A"/>
    <property type="chains" value="A=1-261"/>
</dbReference>
<dbReference type="PDB" id="6N92">
    <property type="method" value="X-ray"/>
    <property type="resolution" value="1.70 A"/>
    <property type="chains" value="A/B/C/D/E/F=1-261"/>
</dbReference>
<dbReference type="PDB" id="6N93">
    <property type="method" value="X-ray"/>
    <property type="resolution" value="1.70 A"/>
    <property type="chains" value="A/B/C/D/E/F=1-261"/>
</dbReference>
<dbReference type="PDB" id="6N94">
    <property type="method" value="X-ray"/>
    <property type="resolution" value="1.75 A"/>
    <property type="chains" value="A/B/C/D/E/F=1-261"/>
</dbReference>
<dbReference type="PDB" id="6N95">
    <property type="method" value="X-ray"/>
    <property type="resolution" value="1.80 A"/>
    <property type="chains" value="A/B/C/D/E/F=1-261"/>
</dbReference>
<dbReference type="PDB" id="6N96">
    <property type="method" value="X-ray"/>
    <property type="resolution" value="1.70 A"/>
    <property type="chains" value="A/B/C/D/E/F=1-261"/>
</dbReference>
<dbReference type="PDB" id="6N97">
    <property type="method" value="X-ray"/>
    <property type="resolution" value="1.75 A"/>
    <property type="chains" value="A/B/C/D/E/F=1-261"/>
</dbReference>
<dbReference type="PDBsum" id="1EF8"/>
<dbReference type="PDBsum" id="1EF9"/>
<dbReference type="PDBsum" id="6N92"/>
<dbReference type="PDBsum" id="6N93"/>
<dbReference type="PDBsum" id="6N94"/>
<dbReference type="PDBsum" id="6N95"/>
<dbReference type="PDBsum" id="6N96"/>
<dbReference type="PDBsum" id="6N97"/>
<dbReference type="SMR" id="P52045"/>
<dbReference type="BioGRID" id="4259438">
    <property type="interactions" value="2"/>
</dbReference>
<dbReference type="FunCoup" id="P52045">
    <property type="interactions" value="55"/>
</dbReference>
<dbReference type="STRING" id="511145.b2919"/>
<dbReference type="DrugBank" id="DB03117">
    <property type="generic name" value="2-carboxypropyl-coenzyme A"/>
</dbReference>
<dbReference type="PaxDb" id="511145-b2919"/>
<dbReference type="EnsemblBacteria" id="AAC75956">
    <property type="protein sequence ID" value="AAC75956"/>
    <property type="gene ID" value="b2919"/>
</dbReference>
<dbReference type="GeneID" id="75205243"/>
<dbReference type="GeneID" id="947408"/>
<dbReference type="KEGG" id="ecj:JW2886"/>
<dbReference type="KEGG" id="eco:b2919"/>
<dbReference type="KEGG" id="ecoc:C3026_15995"/>
<dbReference type="PATRIC" id="fig|1411691.4.peg.3813"/>
<dbReference type="EchoBASE" id="EB2799"/>
<dbReference type="eggNOG" id="COG1024">
    <property type="taxonomic scope" value="Bacteria"/>
</dbReference>
<dbReference type="HOGENOM" id="CLU_009834_7_3_6"/>
<dbReference type="InParanoid" id="P52045"/>
<dbReference type="OMA" id="FCTTPMV"/>
<dbReference type="OrthoDB" id="9777711at2"/>
<dbReference type="PhylomeDB" id="P52045"/>
<dbReference type="BioCyc" id="EcoCyc:G7516-MONOMER"/>
<dbReference type="BioCyc" id="MetaCyc:G7516-MONOMER"/>
<dbReference type="EvolutionaryTrace" id="P52045"/>
<dbReference type="PRO" id="PR:P52045"/>
<dbReference type="Proteomes" id="UP000000625">
    <property type="component" value="Chromosome"/>
</dbReference>
<dbReference type="GO" id="GO:0005829">
    <property type="term" value="C:cytosol"/>
    <property type="evidence" value="ECO:0000250"/>
    <property type="project" value="UniProtKB"/>
</dbReference>
<dbReference type="GO" id="GO:0016831">
    <property type="term" value="F:carboxy-lyase activity"/>
    <property type="evidence" value="ECO:0000250"/>
    <property type="project" value="UniProtKB"/>
</dbReference>
<dbReference type="GO" id="GO:0004492">
    <property type="term" value="F:methyl/ethyl malonyl-CoA decarboxylase activity"/>
    <property type="evidence" value="ECO:0000314"/>
    <property type="project" value="EcoCyc"/>
</dbReference>
<dbReference type="GO" id="GO:0006635">
    <property type="term" value="P:fatty acid beta-oxidation"/>
    <property type="evidence" value="ECO:0000318"/>
    <property type="project" value="GO_Central"/>
</dbReference>
<dbReference type="CDD" id="cd06558">
    <property type="entry name" value="crotonase-like"/>
    <property type="match status" value="1"/>
</dbReference>
<dbReference type="FunFam" id="1.10.12.10:FF:000009">
    <property type="entry name" value="Methylmalonyl-CoA decarboxylase"/>
    <property type="match status" value="1"/>
</dbReference>
<dbReference type="FunFam" id="3.90.226.10:FF:000032">
    <property type="entry name" value="Methylmalonyl-CoA decarboxylase"/>
    <property type="match status" value="1"/>
</dbReference>
<dbReference type="Gene3D" id="3.90.226.10">
    <property type="entry name" value="2-enoyl-CoA Hydratase, Chain A, domain 1"/>
    <property type="match status" value="1"/>
</dbReference>
<dbReference type="Gene3D" id="1.10.12.10">
    <property type="entry name" value="Lyase 2-enoyl-coa Hydratase, Chain A, domain 2"/>
    <property type="match status" value="1"/>
</dbReference>
<dbReference type="InterPro" id="IPR029045">
    <property type="entry name" value="ClpP/crotonase-like_dom_sf"/>
</dbReference>
<dbReference type="InterPro" id="IPR018376">
    <property type="entry name" value="Enoyl-CoA_hyd/isom_CS"/>
</dbReference>
<dbReference type="InterPro" id="IPR001753">
    <property type="entry name" value="Enoyl-CoA_hydra/iso"/>
</dbReference>
<dbReference type="InterPro" id="IPR014748">
    <property type="entry name" value="Enoyl-CoA_hydra_C"/>
</dbReference>
<dbReference type="NCBIfam" id="NF008506">
    <property type="entry name" value="PRK11423.1"/>
    <property type="match status" value="1"/>
</dbReference>
<dbReference type="PANTHER" id="PTHR11941:SF54">
    <property type="entry name" value="ENOYL-COA HYDRATASE, MITOCHONDRIAL"/>
    <property type="match status" value="1"/>
</dbReference>
<dbReference type="PANTHER" id="PTHR11941">
    <property type="entry name" value="ENOYL-COA HYDRATASE-RELATED"/>
    <property type="match status" value="1"/>
</dbReference>
<dbReference type="Pfam" id="PF00378">
    <property type="entry name" value="ECH_1"/>
    <property type="match status" value="1"/>
</dbReference>
<dbReference type="SUPFAM" id="SSF52096">
    <property type="entry name" value="ClpP/crotonase"/>
    <property type="match status" value="1"/>
</dbReference>
<dbReference type="PROSITE" id="PS00166">
    <property type="entry name" value="ENOYL_COA_HYDRATASE"/>
    <property type="match status" value="1"/>
</dbReference>
<proteinExistence type="evidence at protein level"/>
<accession>P52045</accession>
<accession>P76643</accession>
<accession>Q2M9S3</accession>
<gene>
    <name type="primary">scpB</name>
    <name type="synonym">mmcD</name>
    <name type="synonym">ygfG</name>
    <name type="ordered locus">b2919</name>
    <name type="ordered locus">JW2886</name>
</gene>
<feature type="chain" id="PRO_0000109355" description="Methylmalonyl-CoA decarboxylase">
    <location>
        <begin position="1"/>
        <end position="261"/>
    </location>
</feature>
<feature type="binding site">
    <location>
        <begin position="64"/>
        <end position="68"/>
    </location>
    <ligand>
        <name>substrate</name>
    </ligand>
</feature>
<feature type="binding site" evidence="2">
    <location>
        <position position="110"/>
    </location>
    <ligand>
        <name>substrate</name>
    </ligand>
</feature>
<feature type="binding site" evidence="2">
    <location>
        <position position="132"/>
    </location>
    <ligand>
        <name>substrate</name>
    </ligand>
</feature>
<feature type="binding site" evidence="2">
    <location>
        <position position="253"/>
    </location>
    <ligand>
        <name>substrate</name>
    </ligand>
</feature>
<feature type="strand" evidence="5">
    <location>
        <begin position="4"/>
        <end position="11"/>
    </location>
</feature>
<feature type="strand" evidence="5">
    <location>
        <begin position="14"/>
        <end position="19"/>
    </location>
</feature>
<feature type="helix" evidence="5">
    <location>
        <begin position="22"/>
        <end position="24"/>
    </location>
</feature>
<feature type="helix" evidence="5">
    <location>
        <begin position="30"/>
        <end position="42"/>
    </location>
</feature>
<feature type="strand" evidence="5">
    <location>
        <begin position="50"/>
        <end position="54"/>
    </location>
</feature>
<feature type="strand" evidence="5">
    <location>
        <begin position="60"/>
        <end position="63"/>
    </location>
</feature>
<feature type="helix" evidence="5">
    <location>
        <begin position="68"/>
        <end position="70"/>
    </location>
</feature>
<feature type="strand" evidence="5">
    <location>
        <begin position="73"/>
        <end position="76"/>
    </location>
</feature>
<feature type="strand" evidence="4">
    <location>
        <begin position="81"/>
        <end position="83"/>
    </location>
</feature>
<feature type="helix" evidence="5">
    <location>
        <begin position="84"/>
        <end position="94"/>
    </location>
</feature>
<feature type="strand" evidence="5">
    <location>
        <begin position="99"/>
        <end position="103"/>
    </location>
</feature>
<feature type="strand" evidence="5">
    <location>
        <begin position="105"/>
        <end position="108"/>
    </location>
</feature>
<feature type="helix" evidence="5">
    <location>
        <begin position="110"/>
        <end position="117"/>
    </location>
</feature>
<feature type="strand" evidence="5">
    <location>
        <begin position="118"/>
        <end position="124"/>
    </location>
</feature>
<feature type="strand" evidence="5">
    <location>
        <begin position="128"/>
        <end position="130"/>
    </location>
</feature>
<feature type="helix" evidence="5">
    <location>
        <begin position="133"/>
        <end position="135"/>
    </location>
</feature>
<feature type="helix" evidence="5">
    <location>
        <begin position="142"/>
        <end position="146"/>
    </location>
</feature>
<feature type="strand" evidence="5">
    <location>
        <begin position="149"/>
        <end position="152"/>
    </location>
</feature>
<feature type="helix" evidence="5">
    <location>
        <begin position="154"/>
        <end position="163"/>
    </location>
</feature>
<feature type="helix" evidence="5">
    <location>
        <begin position="169"/>
        <end position="174"/>
    </location>
</feature>
<feature type="strand" evidence="5">
    <location>
        <begin position="179"/>
        <end position="182"/>
    </location>
</feature>
<feature type="helix" evidence="5">
    <location>
        <begin position="184"/>
        <end position="199"/>
    </location>
</feature>
<feature type="helix" evidence="5">
    <location>
        <begin position="203"/>
        <end position="218"/>
    </location>
</feature>
<feature type="helix" evidence="5">
    <location>
        <begin position="224"/>
        <end position="238"/>
    </location>
</feature>
<feature type="helix" evidence="5">
    <location>
        <begin position="241"/>
        <end position="251"/>
    </location>
</feature>
<reference key="1">
    <citation type="journal article" date="1997" name="Science">
        <title>The complete genome sequence of Escherichia coli K-12.</title>
        <authorList>
            <person name="Blattner F.R."/>
            <person name="Plunkett G. III"/>
            <person name="Bloch C.A."/>
            <person name="Perna N.T."/>
            <person name="Burland V."/>
            <person name="Riley M."/>
            <person name="Collado-Vides J."/>
            <person name="Glasner J.D."/>
            <person name="Rode C.K."/>
            <person name="Mayhew G.F."/>
            <person name="Gregor J."/>
            <person name="Davis N.W."/>
            <person name="Kirkpatrick H.A."/>
            <person name="Goeden M.A."/>
            <person name="Rose D.J."/>
            <person name="Mau B."/>
            <person name="Shao Y."/>
        </authorList>
    </citation>
    <scope>NUCLEOTIDE SEQUENCE [LARGE SCALE GENOMIC DNA]</scope>
    <source>
        <strain>K12 / MG1655 / ATCC 47076</strain>
    </source>
</reference>
<reference key="2">
    <citation type="journal article" date="2006" name="Mol. Syst. Biol.">
        <title>Highly accurate genome sequences of Escherichia coli K-12 strains MG1655 and W3110.</title>
        <authorList>
            <person name="Hayashi K."/>
            <person name="Morooka N."/>
            <person name="Yamamoto Y."/>
            <person name="Fujita K."/>
            <person name="Isono K."/>
            <person name="Choi S."/>
            <person name="Ohtsubo E."/>
            <person name="Baba T."/>
            <person name="Wanner B.L."/>
            <person name="Mori H."/>
            <person name="Horiuchi T."/>
        </authorList>
    </citation>
    <scope>NUCLEOTIDE SEQUENCE [LARGE SCALE GENOMIC DNA]</scope>
    <source>
        <strain>K12 / W3110 / ATCC 27325 / DSM 5911</strain>
    </source>
</reference>
<reference key="3">
    <citation type="journal article" date="2000" name="Biochemistry">
        <title>Discovering new enzymes and metabolic pathways: conversion of succinate to propionate by Escherichia coli.</title>
        <authorList>
            <person name="Haller T."/>
            <person name="Buckel T."/>
            <person name="Retey J."/>
            <person name="Gerlt J.A."/>
        </authorList>
    </citation>
    <scope>FUNCTION</scope>
    <scope>CATALYTIC ACTIVITY</scope>
    <source>
        <strain>K12 / MG1655 / ATCC 47076</strain>
    </source>
</reference>
<reference key="4">
    <citation type="journal article" date="2000" name="Biochemistry">
        <title>New reactions in the crotonase superfamily: structure of methylmalonyl CoA decarboxylase from Escherichia coli.</title>
        <authorList>
            <person name="Benning M.M."/>
            <person name="Haller T."/>
            <person name="Gerlt J.A."/>
            <person name="Holden H.M."/>
        </authorList>
    </citation>
    <scope>X-RAY CRYSTALLOGRAPHY (1.85 ANGSTROMS) IN COMPLEX WITH SUBSTRATE</scope>
    <scope>SUBUNIT</scope>
</reference>
<keyword id="KW-0002">3D-structure</keyword>
<keyword id="KW-0456">Lyase</keyword>
<keyword id="KW-1185">Reference proteome</keyword>
<organism>
    <name type="scientific">Escherichia coli (strain K12)</name>
    <dbReference type="NCBI Taxonomy" id="83333"/>
    <lineage>
        <taxon>Bacteria</taxon>
        <taxon>Pseudomonadati</taxon>
        <taxon>Pseudomonadota</taxon>
        <taxon>Gammaproteobacteria</taxon>
        <taxon>Enterobacterales</taxon>
        <taxon>Enterobacteriaceae</taxon>
        <taxon>Escherichia</taxon>
    </lineage>
</organism>
<sequence length="261" mass="29173">MSYQYVNVVTINKVAVIEFNYGRKLNALSKVFIDDLMQALSDLNRPEIRCIILRAPSGSKVFSAGHDIHELPSGGRDPLSYDDPLRQITRMIQKFPKPIISMVEGSVWGGAFEMIMSSDLIIAASTSTFSMTPVNLGVPYNLVGIHNLTRDAGFHIVKELIFTASPITAQRALAVGILNHVVEVEELEDFTLQMAHHISEKAPLAIAVIKEELRVLGEAHTMNSDEFERIQGMRRAVYDSEDYQEGMNAFLEKRKPNFVGH</sequence>